<proteinExistence type="inferred from homology"/>
<accession>B7HQV3</accession>
<name>RS17_BACC7</name>
<protein>
    <recommendedName>
        <fullName evidence="1">Small ribosomal subunit protein uS17</fullName>
    </recommendedName>
    <alternativeName>
        <fullName evidence="2">30S ribosomal protein S17</fullName>
    </alternativeName>
</protein>
<reference key="1">
    <citation type="submission" date="2008-10" db="EMBL/GenBank/DDBJ databases">
        <title>Genome sequence of Bacillus cereus AH187.</title>
        <authorList>
            <person name="Dodson R.J."/>
            <person name="Durkin A.S."/>
            <person name="Rosovitz M.J."/>
            <person name="Rasko D.A."/>
            <person name="Kolsto A.B."/>
            <person name="Okstad O.A."/>
            <person name="Ravel J."/>
            <person name="Sutton G."/>
        </authorList>
    </citation>
    <scope>NUCLEOTIDE SEQUENCE [LARGE SCALE GENOMIC DNA]</scope>
    <source>
        <strain>AH187</strain>
    </source>
</reference>
<comment type="function">
    <text evidence="1">One of the primary rRNA binding proteins, it binds specifically to the 5'-end of 16S ribosomal RNA.</text>
</comment>
<comment type="subunit">
    <text evidence="1">Part of the 30S ribosomal subunit.</text>
</comment>
<comment type="similarity">
    <text evidence="1">Belongs to the universal ribosomal protein uS17 family.</text>
</comment>
<organism>
    <name type="scientific">Bacillus cereus (strain AH187)</name>
    <dbReference type="NCBI Taxonomy" id="405534"/>
    <lineage>
        <taxon>Bacteria</taxon>
        <taxon>Bacillati</taxon>
        <taxon>Bacillota</taxon>
        <taxon>Bacilli</taxon>
        <taxon>Bacillales</taxon>
        <taxon>Bacillaceae</taxon>
        <taxon>Bacillus</taxon>
        <taxon>Bacillus cereus group</taxon>
    </lineage>
</organism>
<feature type="chain" id="PRO_1000143220" description="Small ribosomal subunit protein uS17">
    <location>
        <begin position="1"/>
        <end position="87"/>
    </location>
</feature>
<gene>
    <name evidence="1" type="primary">rpsQ</name>
    <name type="ordered locus">BCAH187_A0150</name>
</gene>
<sequence>MSERNQRKVYTGRVVSDKMDKTITVLVETYKTHSLYGKRVKYSKKYKAHDEQNQAKLGDIVKIMETRPLSATKRFRLVEIVEEAVII</sequence>
<evidence type="ECO:0000255" key="1">
    <source>
        <dbReference type="HAMAP-Rule" id="MF_01345"/>
    </source>
</evidence>
<evidence type="ECO:0000305" key="2"/>
<keyword id="KW-0687">Ribonucleoprotein</keyword>
<keyword id="KW-0689">Ribosomal protein</keyword>
<keyword id="KW-0694">RNA-binding</keyword>
<keyword id="KW-0699">rRNA-binding</keyword>
<dbReference type="EMBL" id="CP001177">
    <property type="protein sequence ID" value="ACJ77458.1"/>
    <property type="molecule type" value="Genomic_DNA"/>
</dbReference>
<dbReference type="SMR" id="B7HQV3"/>
<dbReference type="KEGG" id="bcr:BCAH187_A0150"/>
<dbReference type="HOGENOM" id="CLU_073626_1_0_9"/>
<dbReference type="Proteomes" id="UP000002214">
    <property type="component" value="Chromosome"/>
</dbReference>
<dbReference type="GO" id="GO:0022627">
    <property type="term" value="C:cytosolic small ribosomal subunit"/>
    <property type="evidence" value="ECO:0007669"/>
    <property type="project" value="TreeGrafter"/>
</dbReference>
<dbReference type="GO" id="GO:0019843">
    <property type="term" value="F:rRNA binding"/>
    <property type="evidence" value="ECO:0007669"/>
    <property type="project" value="UniProtKB-UniRule"/>
</dbReference>
<dbReference type="GO" id="GO:0003735">
    <property type="term" value="F:structural constituent of ribosome"/>
    <property type="evidence" value="ECO:0007669"/>
    <property type="project" value="InterPro"/>
</dbReference>
<dbReference type="GO" id="GO:0006412">
    <property type="term" value="P:translation"/>
    <property type="evidence" value="ECO:0007669"/>
    <property type="project" value="UniProtKB-UniRule"/>
</dbReference>
<dbReference type="CDD" id="cd00364">
    <property type="entry name" value="Ribosomal_uS17"/>
    <property type="match status" value="1"/>
</dbReference>
<dbReference type="FunFam" id="2.40.50.140:FF:000026">
    <property type="entry name" value="30S ribosomal protein S17"/>
    <property type="match status" value="1"/>
</dbReference>
<dbReference type="Gene3D" id="2.40.50.140">
    <property type="entry name" value="Nucleic acid-binding proteins"/>
    <property type="match status" value="1"/>
</dbReference>
<dbReference type="HAMAP" id="MF_01345_B">
    <property type="entry name" value="Ribosomal_uS17_B"/>
    <property type="match status" value="1"/>
</dbReference>
<dbReference type="InterPro" id="IPR012340">
    <property type="entry name" value="NA-bd_OB-fold"/>
</dbReference>
<dbReference type="InterPro" id="IPR000266">
    <property type="entry name" value="Ribosomal_uS17"/>
</dbReference>
<dbReference type="InterPro" id="IPR019984">
    <property type="entry name" value="Ribosomal_uS17_bact/chlr"/>
</dbReference>
<dbReference type="InterPro" id="IPR019979">
    <property type="entry name" value="Ribosomal_uS17_CS"/>
</dbReference>
<dbReference type="NCBIfam" id="NF004123">
    <property type="entry name" value="PRK05610.1"/>
    <property type="match status" value="1"/>
</dbReference>
<dbReference type="NCBIfam" id="TIGR03635">
    <property type="entry name" value="uS17_bact"/>
    <property type="match status" value="1"/>
</dbReference>
<dbReference type="PANTHER" id="PTHR10744">
    <property type="entry name" value="40S RIBOSOMAL PROTEIN S11 FAMILY MEMBER"/>
    <property type="match status" value="1"/>
</dbReference>
<dbReference type="PANTHER" id="PTHR10744:SF1">
    <property type="entry name" value="SMALL RIBOSOMAL SUBUNIT PROTEIN US17M"/>
    <property type="match status" value="1"/>
</dbReference>
<dbReference type="Pfam" id="PF00366">
    <property type="entry name" value="Ribosomal_S17"/>
    <property type="match status" value="1"/>
</dbReference>
<dbReference type="PRINTS" id="PR00973">
    <property type="entry name" value="RIBOSOMALS17"/>
</dbReference>
<dbReference type="SUPFAM" id="SSF50249">
    <property type="entry name" value="Nucleic acid-binding proteins"/>
    <property type="match status" value="1"/>
</dbReference>
<dbReference type="PROSITE" id="PS00056">
    <property type="entry name" value="RIBOSOMAL_S17"/>
    <property type="match status" value="1"/>
</dbReference>